<proteinExistence type="inferred from homology"/>
<protein>
    <recommendedName>
        <fullName evidence="1">Cytochrome c biogenesis ATP-binding export protein CcmA</fullName>
        <ecNumber evidence="1">7.6.2.5</ecNumber>
    </recommendedName>
    <alternativeName>
        <fullName evidence="1">Heme exporter protein A</fullName>
    </alternativeName>
</protein>
<gene>
    <name evidence="1" type="primary">ccmA</name>
    <name type="ordered locus">ABO_0870</name>
</gene>
<dbReference type="EC" id="7.6.2.5" evidence="1"/>
<dbReference type="EMBL" id="AM286690">
    <property type="protein sequence ID" value="CAL16318.1"/>
    <property type="molecule type" value="Genomic_DNA"/>
</dbReference>
<dbReference type="SMR" id="Q0VR80"/>
<dbReference type="STRING" id="393595.ABO_0870"/>
<dbReference type="KEGG" id="abo:ABO_0870"/>
<dbReference type="eggNOG" id="COG4133">
    <property type="taxonomic scope" value="Bacteria"/>
</dbReference>
<dbReference type="HOGENOM" id="CLU_000604_1_2_6"/>
<dbReference type="OrthoDB" id="9800654at2"/>
<dbReference type="Proteomes" id="UP000008871">
    <property type="component" value="Chromosome"/>
</dbReference>
<dbReference type="GO" id="GO:0005886">
    <property type="term" value="C:plasma membrane"/>
    <property type="evidence" value="ECO:0007669"/>
    <property type="project" value="UniProtKB-SubCell"/>
</dbReference>
<dbReference type="GO" id="GO:0015439">
    <property type="term" value="F:ABC-type heme transporter activity"/>
    <property type="evidence" value="ECO:0007669"/>
    <property type="project" value="UniProtKB-EC"/>
</dbReference>
<dbReference type="GO" id="GO:0005524">
    <property type="term" value="F:ATP binding"/>
    <property type="evidence" value="ECO:0007669"/>
    <property type="project" value="UniProtKB-KW"/>
</dbReference>
<dbReference type="GO" id="GO:0016887">
    <property type="term" value="F:ATP hydrolysis activity"/>
    <property type="evidence" value="ECO:0007669"/>
    <property type="project" value="InterPro"/>
</dbReference>
<dbReference type="GO" id="GO:0017004">
    <property type="term" value="P:cytochrome complex assembly"/>
    <property type="evidence" value="ECO:0007669"/>
    <property type="project" value="UniProtKB-KW"/>
</dbReference>
<dbReference type="Gene3D" id="3.40.50.300">
    <property type="entry name" value="P-loop containing nucleotide triphosphate hydrolases"/>
    <property type="match status" value="1"/>
</dbReference>
<dbReference type="InterPro" id="IPR003593">
    <property type="entry name" value="AAA+_ATPase"/>
</dbReference>
<dbReference type="InterPro" id="IPR003439">
    <property type="entry name" value="ABC_transporter-like_ATP-bd"/>
</dbReference>
<dbReference type="InterPro" id="IPR017871">
    <property type="entry name" value="ABC_transporter-like_CS"/>
</dbReference>
<dbReference type="InterPro" id="IPR005895">
    <property type="entry name" value="ABC_transptr_haem_export_CcmA"/>
</dbReference>
<dbReference type="InterPro" id="IPR027417">
    <property type="entry name" value="P-loop_NTPase"/>
</dbReference>
<dbReference type="NCBIfam" id="TIGR01189">
    <property type="entry name" value="ccmA"/>
    <property type="match status" value="1"/>
</dbReference>
<dbReference type="NCBIfam" id="NF010061">
    <property type="entry name" value="PRK13538.1"/>
    <property type="match status" value="1"/>
</dbReference>
<dbReference type="PANTHER" id="PTHR43499">
    <property type="entry name" value="ABC TRANSPORTER I FAMILY MEMBER 1"/>
    <property type="match status" value="1"/>
</dbReference>
<dbReference type="PANTHER" id="PTHR43499:SF1">
    <property type="entry name" value="ABC TRANSPORTER I FAMILY MEMBER 1"/>
    <property type="match status" value="1"/>
</dbReference>
<dbReference type="Pfam" id="PF00005">
    <property type="entry name" value="ABC_tran"/>
    <property type="match status" value="1"/>
</dbReference>
<dbReference type="SMART" id="SM00382">
    <property type="entry name" value="AAA"/>
    <property type="match status" value="1"/>
</dbReference>
<dbReference type="SUPFAM" id="SSF52540">
    <property type="entry name" value="P-loop containing nucleoside triphosphate hydrolases"/>
    <property type="match status" value="1"/>
</dbReference>
<dbReference type="PROSITE" id="PS00211">
    <property type="entry name" value="ABC_TRANSPORTER_1"/>
    <property type="match status" value="1"/>
</dbReference>
<dbReference type="PROSITE" id="PS50893">
    <property type="entry name" value="ABC_TRANSPORTER_2"/>
    <property type="match status" value="1"/>
</dbReference>
<dbReference type="PROSITE" id="PS51243">
    <property type="entry name" value="CCMA"/>
    <property type="match status" value="1"/>
</dbReference>
<keyword id="KW-0067">ATP-binding</keyword>
<keyword id="KW-0997">Cell inner membrane</keyword>
<keyword id="KW-1003">Cell membrane</keyword>
<keyword id="KW-0201">Cytochrome c-type biogenesis</keyword>
<keyword id="KW-0472">Membrane</keyword>
<keyword id="KW-0547">Nucleotide-binding</keyword>
<keyword id="KW-1185">Reference proteome</keyword>
<keyword id="KW-1278">Translocase</keyword>
<keyword id="KW-0813">Transport</keyword>
<name>CCMA_ALCBS</name>
<organism>
    <name type="scientific">Alcanivorax borkumensis (strain ATCC 700651 / DSM 11573 / NCIMB 13689 / SK2)</name>
    <dbReference type="NCBI Taxonomy" id="393595"/>
    <lineage>
        <taxon>Bacteria</taxon>
        <taxon>Pseudomonadati</taxon>
        <taxon>Pseudomonadota</taxon>
        <taxon>Gammaproteobacteria</taxon>
        <taxon>Oceanospirillales</taxon>
        <taxon>Alcanivoracaceae</taxon>
        <taxon>Alcanivorax</taxon>
    </lineage>
</organism>
<feature type="chain" id="PRO_0000271917" description="Cytochrome c biogenesis ATP-binding export protein CcmA">
    <location>
        <begin position="1"/>
        <end position="217"/>
    </location>
</feature>
<feature type="domain" description="ABC transporter" evidence="1">
    <location>
        <begin position="16"/>
        <end position="214"/>
    </location>
</feature>
<feature type="binding site" evidence="1">
    <location>
        <begin position="48"/>
        <end position="55"/>
    </location>
    <ligand>
        <name>ATP</name>
        <dbReference type="ChEBI" id="CHEBI:30616"/>
    </ligand>
</feature>
<reference key="1">
    <citation type="journal article" date="2006" name="Nat. Biotechnol.">
        <title>Genome sequence of the ubiquitous hydrocarbon-degrading marine bacterium Alcanivorax borkumensis.</title>
        <authorList>
            <person name="Schneiker S."/>
            <person name="Martins dos Santos V.A.P."/>
            <person name="Bartels D."/>
            <person name="Bekel T."/>
            <person name="Brecht M."/>
            <person name="Buhrmester J."/>
            <person name="Chernikova T.N."/>
            <person name="Denaro R."/>
            <person name="Ferrer M."/>
            <person name="Gertler C."/>
            <person name="Goesmann A."/>
            <person name="Golyshina O.V."/>
            <person name="Kaminski F."/>
            <person name="Khachane A.N."/>
            <person name="Lang S."/>
            <person name="Linke B."/>
            <person name="McHardy A.C."/>
            <person name="Meyer F."/>
            <person name="Nechitaylo T."/>
            <person name="Puehler A."/>
            <person name="Regenhardt D."/>
            <person name="Rupp O."/>
            <person name="Sabirova J.S."/>
            <person name="Selbitschka W."/>
            <person name="Yakimov M.M."/>
            <person name="Timmis K.N."/>
            <person name="Vorhoelter F.-J."/>
            <person name="Weidner S."/>
            <person name="Kaiser O."/>
            <person name="Golyshin P.N."/>
        </authorList>
    </citation>
    <scope>NUCLEOTIDE SEQUENCE [LARGE SCALE GENOMIC DNA]</scope>
    <source>
        <strain>ATCC 700651 / DSM 11573 / NCIMB 13689 / SK2</strain>
    </source>
</reference>
<accession>Q0VR80</accession>
<sequence length="217" mass="23794">MSQPATHSDAEPATRLVLEQLSCERDDRLLFSGLSFTASAGEIWQITGANGAGKTTLLRILVGLHGFYEGERQWWQPQWQQQLLYLGHEPGVREELNPLENLRYACALSQQGGDPMAALAAVGLQGFEEVPAAHLSAGQKRRIALARLWLDRKAVWVLDEPYTAIDQDGVAALDQQIQQAAEAGTLVIYTSHHQVGDGVRRLHLAHGQAEVTEGGRV</sequence>
<evidence type="ECO:0000255" key="1">
    <source>
        <dbReference type="HAMAP-Rule" id="MF_01707"/>
    </source>
</evidence>
<comment type="function">
    <text evidence="1">Part of the ABC transporter complex CcmAB involved in the biogenesis of c-type cytochromes; once thought to export heme, this seems not to be the case, but its exact role is uncertain. Responsible for energy coupling to the transport system.</text>
</comment>
<comment type="catalytic activity">
    <reaction evidence="1">
        <text>heme b(in) + ATP + H2O = heme b(out) + ADP + phosphate + H(+)</text>
        <dbReference type="Rhea" id="RHEA:19261"/>
        <dbReference type="ChEBI" id="CHEBI:15377"/>
        <dbReference type="ChEBI" id="CHEBI:15378"/>
        <dbReference type="ChEBI" id="CHEBI:30616"/>
        <dbReference type="ChEBI" id="CHEBI:43474"/>
        <dbReference type="ChEBI" id="CHEBI:60344"/>
        <dbReference type="ChEBI" id="CHEBI:456216"/>
        <dbReference type="EC" id="7.6.2.5"/>
    </reaction>
</comment>
<comment type="subunit">
    <text evidence="1">The complex is composed of two ATP-binding proteins (CcmA) and two transmembrane proteins (CcmB).</text>
</comment>
<comment type="subcellular location">
    <subcellularLocation>
        <location evidence="1">Cell inner membrane</location>
        <topology evidence="1">Peripheral membrane protein</topology>
    </subcellularLocation>
</comment>
<comment type="similarity">
    <text evidence="1">Belongs to the ABC transporter superfamily. CcmA exporter (TC 3.A.1.107) family.</text>
</comment>